<dbReference type="EMBL" id="CP000444">
    <property type="protein sequence ID" value="ABI42437.1"/>
    <property type="molecule type" value="Genomic_DNA"/>
</dbReference>
<dbReference type="SMR" id="Q0HWR8"/>
<dbReference type="KEGG" id="shm:Shewmr7_1438"/>
<dbReference type="HOGENOM" id="CLU_044581_0_0_6"/>
<dbReference type="GO" id="GO:0005886">
    <property type="term" value="C:plasma membrane"/>
    <property type="evidence" value="ECO:0007669"/>
    <property type="project" value="UniProtKB-SubCell"/>
</dbReference>
<dbReference type="GO" id="GO:0005295">
    <property type="term" value="F:neutral L-amino acid:sodium symporter activity"/>
    <property type="evidence" value="ECO:0007669"/>
    <property type="project" value="TreeGrafter"/>
</dbReference>
<dbReference type="GO" id="GO:0032329">
    <property type="term" value="P:serine transport"/>
    <property type="evidence" value="ECO:0007669"/>
    <property type="project" value="InterPro"/>
</dbReference>
<dbReference type="GO" id="GO:0015826">
    <property type="term" value="P:threonine transport"/>
    <property type="evidence" value="ECO:0007669"/>
    <property type="project" value="InterPro"/>
</dbReference>
<dbReference type="FunFam" id="1.10.3860.10:FF:000003">
    <property type="entry name" value="Serine/threonine transporter sstT"/>
    <property type="match status" value="1"/>
</dbReference>
<dbReference type="Gene3D" id="1.10.3860.10">
    <property type="entry name" value="Sodium:dicarboxylate symporter"/>
    <property type="match status" value="1"/>
</dbReference>
<dbReference type="HAMAP" id="MF_01582">
    <property type="entry name" value="Ser_Thr_transp_SstT"/>
    <property type="match status" value="1"/>
</dbReference>
<dbReference type="InterPro" id="IPR001991">
    <property type="entry name" value="Na-dicarboxylate_symporter"/>
</dbReference>
<dbReference type="InterPro" id="IPR036458">
    <property type="entry name" value="Na:dicarbo_symporter_sf"/>
</dbReference>
<dbReference type="InterPro" id="IPR023025">
    <property type="entry name" value="Ser_Thr_transp_SstT"/>
</dbReference>
<dbReference type="NCBIfam" id="NF010151">
    <property type="entry name" value="PRK13628.1"/>
    <property type="match status" value="1"/>
</dbReference>
<dbReference type="PANTHER" id="PTHR42865">
    <property type="entry name" value="PROTON/GLUTAMATE-ASPARTATE SYMPORTER"/>
    <property type="match status" value="1"/>
</dbReference>
<dbReference type="PANTHER" id="PTHR42865:SF8">
    <property type="entry name" value="SERINE_THREONINE TRANSPORTER SSTT"/>
    <property type="match status" value="1"/>
</dbReference>
<dbReference type="Pfam" id="PF00375">
    <property type="entry name" value="SDF"/>
    <property type="match status" value="1"/>
</dbReference>
<dbReference type="PRINTS" id="PR00173">
    <property type="entry name" value="EDTRNSPORT"/>
</dbReference>
<dbReference type="SUPFAM" id="SSF118215">
    <property type="entry name" value="Proton glutamate symport protein"/>
    <property type="match status" value="1"/>
</dbReference>
<comment type="function">
    <text evidence="1">Involved in the import of serine and threonine into the cell, with the concomitant import of sodium (symport system).</text>
</comment>
<comment type="catalytic activity">
    <reaction evidence="1">
        <text>L-serine(in) + Na(+)(in) = L-serine(out) + Na(+)(out)</text>
        <dbReference type="Rhea" id="RHEA:29575"/>
        <dbReference type="ChEBI" id="CHEBI:29101"/>
        <dbReference type="ChEBI" id="CHEBI:33384"/>
    </reaction>
    <physiologicalReaction direction="right-to-left" evidence="1">
        <dbReference type="Rhea" id="RHEA:29577"/>
    </physiologicalReaction>
</comment>
<comment type="catalytic activity">
    <reaction evidence="1">
        <text>L-threonine(in) + Na(+)(in) = L-threonine(out) + Na(+)(out)</text>
        <dbReference type="Rhea" id="RHEA:69999"/>
        <dbReference type="ChEBI" id="CHEBI:29101"/>
        <dbReference type="ChEBI" id="CHEBI:57926"/>
    </reaction>
    <physiologicalReaction direction="right-to-left" evidence="1">
        <dbReference type="Rhea" id="RHEA:70001"/>
    </physiologicalReaction>
</comment>
<comment type="subcellular location">
    <subcellularLocation>
        <location evidence="1">Cell inner membrane</location>
        <topology evidence="1">Multi-pass membrane protein</topology>
    </subcellularLocation>
</comment>
<comment type="similarity">
    <text evidence="1">Belongs to the dicarboxylate/amino acid:cation symporter (DAACS) (TC 2.A.23) family.</text>
</comment>
<name>SSTT_SHESR</name>
<proteinExistence type="inferred from homology"/>
<organism>
    <name type="scientific">Shewanella sp. (strain MR-7)</name>
    <dbReference type="NCBI Taxonomy" id="60481"/>
    <lineage>
        <taxon>Bacteria</taxon>
        <taxon>Pseudomonadati</taxon>
        <taxon>Pseudomonadota</taxon>
        <taxon>Gammaproteobacteria</taxon>
        <taxon>Alteromonadales</taxon>
        <taxon>Shewanellaceae</taxon>
        <taxon>Shewanella</taxon>
    </lineage>
</organism>
<gene>
    <name evidence="1" type="primary">sstT</name>
    <name type="ordered locus">Shewmr7_1438</name>
</gene>
<protein>
    <recommendedName>
        <fullName evidence="1">Serine/threonine transporter SstT</fullName>
    </recommendedName>
    <alternativeName>
        <fullName evidence="1">Na(+)/serine-threonine symporter</fullName>
    </alternativeName>
</protein>
<keyword id="KW-0029">Amino-acid transport</keyword>
<keyword id="KW-0997">Cell inner membrane</keyword>
<keyword id="KW-1003">Cell membrane</keyword>
<keyword id="KW-0472">Membrane</keyword>
<keyword id="KW-0769">Symport</keyword>
<keyword id="KW-0812">Transmembrane</keyword>
<keyword id="KW-1133">Transmembrane helix</keyword>
<keyword id="KW-0813">Transport</keyword>
<sequence length="408" mass="42071">MKQESSFLAKLANGSLVLQILVGIIAGVSLASFSHEAAKQVAFLGSLFVGALKAIAPILVFILVASSIANQKKNTQTNMRPIVVLYLFGTFAAALTAVLLSMMFPTNLVLVAGVEGTSPPQGIGEVINTLLFKLVDNPVNALMTGNYIGILAWGVGLGLALHHASDSTKQVFADVSHGISQMVRFIIRLAPIGIFGLVAATFAETGFAAIAGYAKLLAVLLGAMAIIALIVNPLIVYVKIKRNPYPLVIRCLRESGVTAFFTRSSAANIPVNMALCEKLKLHEDTYSVSIPLGATINMGGAAITITVLTLAAAHTLGIQVDLLTALLLSVVAAVSACGASGVAGGSLLLIPLACSLFGISNDVAMQVVAVGFIIGVIQDAAETALNSSTDVIFTAAACEAAENKAKLG</sequence>
<feature type="chain" id="PRO_0000309127" description="Serine/threonine transporter SstT">
    <location>
        <begin position="1"/>
        <end position="408"/>
    </location>
</feature>
<feature type="transmembrane region" description="Helical" evidence="1">
    <location>
        <begin position="11"/>
        <end position="31"/>
    </location>
</feature>
<feature type="transmembrane region" description="Helical" evidence="1">
    <location>
        <begin position="43"/>
        <end position="63"/>
    </location>
</feature>
<feature type="transmembrane region" description="Helical" evidence="1">
    <location>
        <begin position="82"/>
        <end position="102"/>
    </location>
</feature>
<feature type="transmembrane region" description="Helical" evidence="1">
    <location>
        <begin position="141"/>
        <end position="161"/>
    </location>
</feature>
<feature type="transmembrane region" description="Helical" evidence="1">
    <location>
        <begin position="192"/>
        <end position="212"/>
    </location>
</feature>
<feature type="transmembrane region" description="Helical" evidence="1">
    <location>
        <begin position="216"/>
        <end position="236"/>
    </location>
</feature>
<feature type="transmembrane region" description="Helical" evidence="1">
    <location>
        <begin position="298"/>
        <end position="318"/>
    </location>
</feature>
<feature type="transmembrane region" description="Helical" evidence="1">
    <location>
        <begin position="339"/>
        <end position="359"/>
    </location>
</feature>
<feature type="transmembrane region" description="Helical" evidence="1">
    <location>
        <begin position="363"/>
        <end position="383"/>
    </location>
</feature>
<reference key="1">
    <citation type="submission" date="2006-08" db="EMBL/GenBank/DDBJ databases">
        <title>Complete sequence of chromosome 1 of Shewanella sp. MR-7.</title>
        <authorList>
            <person name="Copeland A."/>
            <person name="Lucas S."/>
            <person name="Lapidus A."/>
            <person name="Barry K."/>
            <person name="Detter J.C."/>
            <person name="Glavina del Rio T."/>
            <person name="Hammon N."/>
            <person name="Israni S."/>
            <person name="Dalin E."/>
            <person name="Tice H."/>
            <person name="Pitluck S."/>
            <person name="Kiss H."/>
            <person name="Brettin T."/>
            <person name="Bruce D."/>
            <person name="Han C."/>
            <person name="Tapia R."/>
            <person name="Gilna P."/>
            <person name="Schmutz J."/>
            <person name="Larimer F."/>
            <person name="Land M."/>
            <person name="Hauser L."/>
            <person name="Kyrpides N."/>
            <person name="Mikhailova N."/>
            <person name="Nealson K."/>
            <person name="Konstantinidis K."/>
            <person name="Klappenbach J."/>
            <person name="Tiedje J."/>
            <person name="Richardson P."/>
        </authorList>
    </citation>
    <scope>NUCLEOTIDE SEQUENCE [LARGE SCALE GENOMIC DNA]</scope>
    <source>
        <strain>MR-7</strain>
    </source>
</reference>
<evidence type="ECO:0000255" key="1">
    <source>
        <dbReference type="HAMAP-Rule" id="MF_01582"/>
    </source>
</evidence>
<accession>Q0HWR8</accession>